<organism>
    <name type="scientific">Tula orthohantavirus</name>
    <name type="common">TULV</name>
    <name type="synonym">Tula virus</name>
    <dbReference type="NCBI Taxonomy" id="3052503"/>
    <lineage>
        <taxon>Viruses</taxon>
        <taxon>Riboviria</taxon>
        <taxon>Orthornavirae</taxon>
        <taxon>Negarnaviricota</taxon>
        <taxon>Polyploviricotina</taxon>
        <taxon>Ellioviricetes</taxon>
        <taxon>Bunyavirales</taxon>
        <taxon>Hantaviridae</taxon>
        <taxon>Mammantavirinae</taxon>
        <taxon>Orthohantavirus</taxon>
    </lineage>
</organism>
<protein>
    <recommendedName>
        <fullName>Envelopment polyprotein</fullName>
    </recommendedName>
    <alternativeName>
        <fullName evidence="1">Glycoprotein precursor</fullName>
    </alternativeName>
    <alternativeName>
        <fullName>M polyprotein</fullName>
    </alternativeName>
    <component>
        <recommendedName>
            <fullName evidence="1">Glycoprotein N</fullName>
            <shortName>Gn</shortName>
        </recommendedName>
        <alternativeName>
            <fullName>Glycoprotein G1</fullName>
        </alternativeName>
    </component>
    <component>
        <recommendedName>
            <fullName evidence="1">Glycoprotein C</fullName>
            <shortName>Gc</shortName>
        </recommendedName>
        <alternativeName>
            <fullName>Glycoprotein G2</fullName>
        </alternativeName>
    </component>
</protein>
<evidence type="ECO:0000250" key="1">
    <source>
        <dbReference type="UniProtKB" id="P08668"/>
    </source>
</evidence>
<evidence type="ECO:0000250" key="2">
    <source>
        <dbReference type="UniProtKB" id="P27312"/>
    </source>
</evidence>
<evidence type="ECO:0000250" key="3">
    <source>
        <dbReference type="UniProtKB" id="P41266"/>
    </source>
</evidence>
<evidence type="ECO:0000250" key="4">
    <source>
        <dbReference type="UniProtKB" id="Q9E006"/>
    </source>
</evidence>
<evidence type="ECO:0000255" key="5"/>
<evidence type="ECO:0000255" key="6">
    <source>
        <dbReference type="PROSITE-ProRule" id="PRU00379"/>
    </source>
</evidence>
<evidence type="ECO:0000269" key="7">
    <source>
    </source>
</evidence>
<evidence type="ECO:0000269" key="8">
    <source>
    </source>
</evidence>
<evidence type="ECO:0000269" key="9">
    <source>
    </source>
</evidence>
<evidence type="ECO:0000269" key="10">
    <source>
    </source>
</evidence>
<evidence type="ECO:0000269" key="11">
    <source>
    </source>
</evidence>
<evidence type="ECO:0000269" key="12">
    <source>
    </source>
</evidence>
<evidence type="ECO:0000305" key="13"/>
<gene>
    <name type="primary">GP</name>
</gene>
<name>GP_TULV</name>
<feature type="signal peptide" evidence="5">
    <location>
        <begin position="1"/>
        <end position="19"/>
    </location>
</feature>
<feature type="chain" id="PRO_0000455203" description="Envelopment polyprotein" evidence="1">
    <location>
        <begin position="20"/>
        <end position="1141"/>
    </location>
</feature>
<feature type="chain" id="PRO_0000455204" description="Glycoprotein N" evidence="1">
    <location>
        <begin position="20"/>
        <end position="653"/>
    </location>
</feature>
<feature type="chain" id="PRO_0000455205" description="Glycoprotein C" evidence="1">
    <location>
        <begin position="654"/>
        <end position="1141"/>
    </location>
</feature>
<feature type="topological domain" description="Lumenal" evidence="5">
    <location>
        <begin position="20"/>
        <end position="489"/>
    </location>
</feature>
<feature type="transmembrane region" description="Helical" evidence="5">
    <location>
        <begin position="490"/>
        <end position="510"/>
    </location>
</feature>
<feature type="topological domain" description="Cytoplasmic" evidence="5">
    <location>
        <begin position="511"/>
        <end position="632"/>
    </location>
</feature>
<feature type="transmembrane region" description="Helical" evidence="5">
    <location>
        <begin position="633"/>
        <end position="653"/>
    </location>
</feature>
<feature type="topological domain" description="Lumenal" evidence="5">
    <location>
        <begin position="654"/>
        <end position="1109"/>
    </location>
</feature>
<feature type="transmembrane region" description="Helical" evidence="5">
    <location>
        <begin position="1110"/>
        <end position="1130"/>
    </location>
</feature>
<feature type="topological domain" description="Cytoplasmic" evidence="5">
    <location>
        <begin position="1131"/>
        <end position="1141"/>
    </location>
</feature>
<feature type="domain" description="ITAM" evidence="6">
    <location>
        <begin position="616"/>
        <end position="639"/>
    </location>
</feature>
<feature type="zinc finger region" description="CCHC-type 1" evidence="4">
    <location>
        <begin position="550"/>
        <end position="570"/>
    </location>
</feature>
<feature type="zinc finger region" description="CCHC-type 2" evidence="4">
    <location>
        <begin position="575"/>
        <end position="596"/>
    </location>
</feature>
<feature type="region of interest" description="Binding to the ribonucleoprotein" evidence="4">
    <location>
        <begin position="521"/>
        <end position="538"/>
    </location>
</feature>
<feature type="region of interest" description="Binding to the ribonucleoprotein" evidence="2">
    <location>
        <begin position="593"/>
        <end position="610"/>
    </location>
</feature>
<feature type="region of interest" description="Binding to the ribonucleoprotein" evidence="4">
    <location>
        <begin position="597"/>
        <end position="608"/>
    </location>
</feature>
<feature type="region of interest" description="Inhibition of interferon induction" evidence="10">
    <location>
        <begin position="612"/>
        <end position="653"/>
    </location>
</feature>
<feature type="region of interest" description="Binding to the ribonucleoprotein" evidence="2">
    <location>
        <begin position="616"/>
        <end position="630"/>
    </location>
</feature>
<feature type="region of interest" description="Fusion loop" evidence="3">
    <location>
        <begin position="762"/>
        <end position="782"/>
    </location>
</feature>
<feature type="region of interest" description="Binding to the ribonucleoprotein" evidence="2">
    <location>
        <begin position="1126"/>
        <end position="1141"/>
    </location>
</feature>
<feature type="short sequence motif" description="YxxL" evidence="1">
    <location>
        <begin position="620"/>
        <end position="623"/>
    </location>
</feature>
<feature type="site" description="Cleavage; by host signal peptidase" evidence="1">
    <location>
        <begin position="653"/>
        <end position="654"/>
    </location>
</feature>
<feature type="modified residue" description="Phosphotyrosine" evidence="6">
    <location>
        <position position="620"/>
    </location>
</feature>
<feature type="modified residue" description="Phosphotyrosine" evidence="6">
    <location>
        <position position="633"/>
    </location>
</feature>
<feature type="glycosylation site" description="N-linked (GlcNAc...) asparagine; by host" evidence="5">
    <location>
        <position position="137"/>
    </location>
</feature>
<feature type="glycosylation site" description="N-linked (GlcNAc...) asparagine; by host" evidence="5">
    <location>
        <position position="352"/>
    </location>
</feature>
<feature type="glycosylation site" description="N-linked (GlcNAc...) asparagine; by host" evidence="5">
    <location>
        <position position="404"/>
    </location>
</feature>
<feature type="glycosylation site" description="N-linked (GlcNAc...) asparagine; by host" evidence="1">
    <location>
        <position position="932"/>
    </location>
</feature>
<feature type="disulfide bond" evidence="4">
    <location>
        <begin position="29"/>
        <end position="154"/>
    </location>
</feature>
<feature type="disulfide bond" evidence="4">
    <location>
        <begin position="63"/>
        <end position="160"/>
    </location>
</feature>
<feature type="disulfide bond" evidence="4">
    <location>
        <begin position="112"/>
        <end position="131"/>
    </location>
</feature>
<feature type="disulfide bond" evidence="4">
    <location>
        <begin position="136"/>
        <end position="141"/>
    </location>
</feature>
<feature type="disulfide bond" evidence="4">
    <location>
        <begin position="178"/>
        <end position="188"/>
    </location>
</feature>
<feature type="disulfide bond" evidence="4">
    <location>
        <begin position="213"/>
        <end position="252"/>
    </location>
</feature>
<feature type="disulfide bond" evidence="4">
    <location>
        <begin position="381"/>
        <end position="440"/>
    </location>
</feature>
<feature type="disulfide bond" evidence="4">
    <location>
        <begin position="385"/>
        <end position="394"/>
    </location>
</feature>
<feature type="disulfide bond" evidence="4">
    <location>
        <begin position="410"/>
        <end position="429"/>
    </location>
</feature>
<feature type="disulfide bond" evidence="4">
    <location>
        <begin position="457"/>
        <end position="480"/>
    </location>
</feature>
<feature type="disulfide bond" evidence="1">
    <location>
        <begin position="740"/>
        <end position="775"/>
    </location>
</feature>
<feature type="disulfide bond" evidence="1">
    <location>
        <begin position="744"/>
        <end position="782"/>
    </location>
</feature>
<feature type="disulfide bond" evidence="1">
    <location>
        <begin position="756"/>
        <end position="889"/>
    </location>
</feature>
<feature type="disulfide bond" evidence="1">
    <location>
        <begin position="770"/>
        <end position="900"/>
    </location>
</feature>
<feature type="disulfide bond" evidence="1">
    <location>
        <begin position="785"/>
        <end position="908"/>
    </location>
</feature>
<feature type="disulfide bond" evidence="1">
    <location>
        <begin position="811"/>
        <end position="820"/>
    </location>
</feature>
<feature type="disulfide bond" evidence="1">
    <location>
        <begin position="828"/>
        <end position="837"/>
    </location>
</feature>
<feature type="disulfide bond" evidence="1">
    <location>
        <begin position="868"/>
        <end position="872"/>
    </location>
</feature>
<feature type="disulfide bond" evidence="1">
    <location>
        <begin position="974"/>
        <end position="1004"/>
    </location>
</feature>
<feature type="disulfide bond" evidence="1">
    <location>
        <begin position="997"/>
        <end position="1049"/>
    </location>
</feature>
<feature type="disulfide bond" evidence="1">
    <location>
        <begin position="1014"/>
        <end position="1019"/>
    </location>
</feature>
<feature type="disulfide bond" evidence="1">
    <location>
        <begin position="1050"/>
        <end position="1055"/>
    </location>
</feature>
<feature type="disulfide bond" evidence="4">
    <location>
        <begin position="1089"/>
        <end position="1093"/>
    </location>
</feature>
<keyword id="KW-1072">Activation of host autophagy by virus</keyword>
<keyword id="KW-1015">Disulfide bond</keyword>
<keyword id="KW-1170">Fusion of virus membrane with host endosomal membrane</keyword>
<keyword id="KW-1168">Fusion of virus membrane with host membrane</keyword>
<keyword id="KW-0325">Glycoprotein</keyword>
<keyword id="KW-1038">Host endoplasmic reticulum</keyword>
<keyword id="KW-1040">Host Golgi apparatus</keyword>
<keyword id="KW-1043">Host membrane</keyword>
<keyword id="KW-1045">Host mitochondrion</keyword>
<keyword id="KW-0945">Host-virus interaction</keyword>
<keyword id="KW-1090">Inhibition of host innate immune response by virus</keyword>
<keyword id="KW-1097">Inhibition of host MAVS by virus</keyword>
<keyword id="KW-1113">Inhibition of host RLR pathway by virus</keyword>
<keyword id="KW-1110">Inhibition of host TRAFs by virus</keyword>
<keyword id="KW-0472">Membrane</keyword>
<keyword id="KW-0479">Metal-binding</keyword>
<keyword id="KW-0597">Phosphoprotein</keyword>
<keyword id="KW-0677">Repeat</keyword>
<keyword id="KW-0732">Signal</keyword>
<keyword id="KW-0812">Transmembrane</keyword>
<keyword id="KW-1133">Transmembrane helix</keyword>
<keyword id="KW-1161">Viral attachment to host cell</keyword>
<keyword id="KW-0261">Viral envelope protein</keyword>
<keyword id="KW-0899">Viral immunoevasion</keyword>
<keyword id="KW-1162">Viral penetration into host cytoplasm</keyword>
<keyword id="KW-0946">Virion</keyword>
<keyword id="KW-1164">Virus endocytosis by host</keyword>
<keyword id="KW-1160">Virus entry into host cell</keyword>
<keyword id="KW-0862">Zinc</keyword>
<keyword id="KW-0863">Zinc-finger</keyword>
<proteinExistence type="evidence at protein level"/>
<sequence>MFCLCLSLLGLLLCWPAATRNLLELKVECPHTIGLGQGIVIGSAELPPVPLAKVESLKLESSCNFDLHTSTAAQQAFTKWSWEKKADTAENAKAASTTFQSSSKEVQLRGLCVIPTLVLETASRTRKTVTCFDLSCNQTVCQPTVYLMAPIQTCVTTKSCLLGLGDQRIQVVYEKTYCVSGQLIEGNCFNPLHTIAISQPTHTYDIMTLAVHCFFISKKGGTDDTLKIEKQFETLVEKTGCTENALKGYYACILGTSSEVVYVPAMDDYRSSEILSRMTTAPHGEDHDIDPNAISSLRIVGQLTGKAPSTESSDTVQGIAFAGTPLYTSTSILVRKEDPIYLWSPGIIPEGNHSQCDKKTLPLTWTGFITLPGEIEKTTQCTVFCTLSGPGADCEAYSDTGIFNISSPTCLVNRVQRFRGAEQQVKFVCQRVDLDITVYCNGVKKVILTKTLVIGQCIYTFTSIFSLMPGVAHSLAVELCVPGLHGWATISLLITFCFGWLAIPLLSMIIIRFLLIFTYLCSKYSTDSKFKLIIEKVKQEYQKTMGSMVCEVCQQGCETAKELESHKKSCPHGQCPYCLNPTEATESALQAHFKVCKLTTRFQENLKKSLSTYEPKRGLYRTLSMFRYKSKCYVGLVWCILLTMELIVWAASAETINLEPGWTDTAHGSGIIPLKTDLELDFSLPSSATYTYRRELQNPANEQEKIPFHFQMERQVIHAEIQHLGHWMDGTFNLKTAFHCYGSCIKYAYPWQTAKCFLEKDFEFETGWGCNPPDCPGVGTGCTACGVYLDKLRSVGKVYKILSLKYTRKVCIQLGTEQTCKTIDSNDCLVTTSVKVCMIGTISKFQPGDTLLFLGPLEEGGMIFKQWCTTTCQFGDPGDIMSTPLGMKCPEHAGSFRKKCSFATLPSCQYDGNTVSGYQRMIATKDSFQSFNITEPHITTNSLEWVDPDSSLKDHVNLIVNRDLSFQDLAENPCQVDLSVSSIDGAWGSGVGFNLVCSVSLTECASFLTSIKACDSAMCYGSSTANLVRGQNTVHVVGKGGHSGSKFMCCHDKKCSATGLVAAAPHLDRVTGYNQIDTNKVFDDGAPQCGVHCWFKKSGEWLLGILSGNWMVVAVLIALFIFSLLLFSLCCPRRQNYKKNK</sequence>
<dbReference type="EMBL" id="Z69993">
    <property type="status" value="NOT_ANNOTATED_CDS"/>
    <property type="molecule type" value="Genomic_RNA"/>
</dbReference>
<dbReference type="SMR" id="P0DTJ1"/>
<dbReference type="GlyCosmos" id="P0DTJ1">
    <property type="glycosylation" value="4 sites, No reported glycans"/>
</dbReference>
<dbReference type="Proteomes" id="UP000243699">
    <property type="component" value="Genome"/>
</dbReference>
<dbReference type="GO" id="GO:0044167">
    <property type="term" value="C:host cell endoplasmic reticulum membrane"/>
    <property type="evidence" value="ECO:0007669"/>
    <property type="project" value="UniProtKB-SubCell"/>
</dbReference>
<dbReference type="GO" id="GO:0044178">
    <property type="term" value="C:host cell Golgi membrane"/>
    <property type="evidence" value="ECO:0007669"/>
    <property type="project" value="UniProtKB-SubCell"/>
</dbReference>
<dbReference type="GO" id="GO:0033650">
    <property type="term" value="C:host cell mitochondrion"/>
    <property type="evidence" value="ECO:0007669"/>
    <property type="project" value="UniProtKB-SubCell"/>
</dbReference>
<dbReference type="GO" id="GO:0044228">
    <property type="term" value="C:host cell surface"/>
    <property type="evidence" value="ECO:0007669"/>
    <property type="project" value="UniProtKB-SubCell"/>
</dbReference>
<dbReference type="GO" id="GO:0016020">
    <property type="term" value="C:membrane"/>
    <property type="evidence" value="ECO:0007669"/>
    <property type="project" value="UniProtKB-KW"/>
</dbReference>
<dbReference type="GO" id="GO:0019031">
    <property type="term" value="C:viral envelope"/>
    <property type="evidence" value="ECO:0007669"/>
    <property type="project" value="UniProtKB-KW"/>
</dbReference>
<dbReference type="GO" id="GO:0055036">
    <property type="term" value="C:virion membrane"/>
    <property type="evidence" value="ECO:0007669"/>
    <property type="project" value="UniProtKB-SubCell"/>
</dbReference>
<dbReference type="GO" id="GO:0008270">
    <property type="term" value="F:zinc ion binding"/>
    <property type="evidence" value="ECO:0007669"/>
    <property type="project" value="UniProtKB-KW"/>
</dbReference>
<dbReference type="GO" id="GO:0075509">
    <property type="term" value="P:endocytosis involved in viral entry into host cell"/>
    <property type="evidence" value="ECO:0007669"/>
    <property type="project" value="UniProtKB-KW"/>
</dbReference>
<dbReference type="GO" id="GO:0039654">
    <property type="term" value="P:fusion of virus membrane with host endosome membrane"/>
    <property type="evidence" value="ECO:0007669"/>
    <property type="project" value="UniProtKB-KW"/>
</dbReference>
<dbReference type="GO" id="GO:0007165">
    <property type="term" value="P:signal transduction"/>
    <property type="evidence" value="ECO:0007669"/>
    <property type="project" value="InterPro"/>
</dbReference>
<dbReference type="GO" id="GO:0039520">
    <property type="term" value="P:symbiont-mediated activation of host autophagy"/>
    <property type="evidence" value="ECO:0007669"/>
    <property type="project" value="UniProtKB-KW"/>
</dbReference>
<dbReference type="GO" id="GO:0039545">
    <property type="term" value="P:symbiont-mediated suppression of host cytoplasmic pattern recognition receptor signaling pathway via inhibition of MAVS activity"/>
    <property type="evidence" value="ECO:0007669"/>
    <property type="project" value="UniProtKB-KW"/>
</dbReference>
<dbReference type="GO" id="GO:0039527">
    <property type="term" value="P:symbiont-mediated suppression of host TRAF-mediated signal transduction"/>
    <property type="evidence" value="ECO:0007669"/>
    <property type="project" value="UniProtKB-KW"/>
</dbReference>
<dbReference type="GO" id="GO:0019062">
    <property type="term" value="P:virion attachment to host cell"/>
    <property type="evidence" value="ECO:0007669"/>
    <property type="project" value="UniProtKB-KW"/>
</dbReference>
<dbReference type="Gene3D" id="1.10.8.1320">
    <property type="match status" value="1"/>
</dbReference>
<dbReference type="InterPro" id="IPR016402">
    <property type="entry name" value="Envelope_glycoprot_Hantavirus"/>
</dbReference>
<dbReference type="InterPro" id="IPR048791">
    <property type="entry name" value="Gc_C_bunya"/>
</dbReference>
<dbReference type="InterPro" id="IPR048790">
    <property type="entry name" value="Gn-B_hanta"/>
</dbReference>
<dbReference type="InterPro" id="IPR002532">
    <property type="entry name" value="Hanta_Gc_N"/>
</dbReference>
<dbReference type="InterPro" id="IPR002534">
    <property type="entry name" value="Hanta_Gn-H"/>
</dbReference>
<dbReference type="InterPro" id="IPR012316">
    <property type="entry name" value="ITAM_motif_hantavir-typ"/>
</dbReference>
<dbReference type="Pfam" id="PF20682">
    <property type="entry name" value="Hanta_Gc_C"/>
    <property type="match status" value="1"/>
</dbReference>
<dbReference type="Pfam" id="PF01561">
    <property type="entry name" value="Hanta_Gc_N"/>
    <property type="match status" value="1"/>
</dbReference>
<dbReference type="Pfam" id="PF20679">
    <property type="entry name" value="Hanta_Gn-B"/>
    <property type="match status" value="1"/>
</dbReference>
<dbReference type="Pfam" id="PF01567">
    <property type="entry name" value="Hanta_Gn-H"/>
    <property type="match status" value="1"/>
</dbReference>
<dbReference type="Pfam" id="PF10538">
    <property type="entry name" value="ITAM_Cys-rich"/>
    <property type="match status" value="1"/>
</dbReference>
<dbReference type="PIRSF" id="PIRSF003945">
    <property type="entry name" value="M_poly_HantaV"/>
    <property type="match status" value="1"/>
</dbReference>
<dbReference type="PROSITE" id="PS51056">
    <property type="entry name" value="ITAM_2"/>
    <property type="match status" value="1"/>
</dbReference>
<reference key="1">
    <citation type="journal article" date="1996" name="J. Gen. Virol.">
        <title>Isolation and characterization of Tula virus, a distinct serotype in the genus Hantavirus, family Bunyaviridae.</title>
        <authorList>
            <person name="Vapalahti O."/>
            <person name="Lundkvist A."/>
            <person name="Kukkonen S.K."/>
            <person name="Cheng Y."/>
            <person name="Gilljam M."/>
            <person name="Kanerva M."/>
            <person name="Manni T."/>
            <person name="Pejcoch M."/>
            <person name="Niemimaa J."/>
            <person name="Kaikusalo A."/>
            <person name="Henttonen H."/>
            <person name="Vaheri A."/>
            <person name="Plyusnin A."/>
        </authorList>
    </citation>
    <scope>NUCLEOTIDE SEQUENCE [GENOMIC RNA]</scope>
    <source>
        <strain>Isolate Tula/Moravia/5302v/95</strain>
    </source>
</reference>
<reference key="2">
    <citation type="journal article" date="2006" name="J. Virol.">
        <title>The pathogenic NY-1 hantavirus G1 cytoplasmic tail inhibits RIG-I- and TBK-1-directed interferon responses.</title>
        <authorList>
            <person name="Alff P.J."/>
            <person name="Gavrilovskaya I.N."/>
            <person name="Gorbunova E."/>
            <person name="Endriss K."/>
            <person name="Chong Y."/>
            <person name="Geimonen E."/>
            <person name="Sen N."/>
            <person name="Reich N.C."/>
            <person name="Mackow E.R."/>
        </authorList>
    </citation>
    <scope>DOMAIN (GLYCOPROTEIN N)</scope>
    <scope>FUNCTION (GLYCOPROTEIN N)</scope>
</reference>
<reference key="3">
    <citation type="journal article" date="2010" name="Virus Res.">
        <title>Interaction between hantaviral nucleocapsid protein and the cytoplasmic tail of surface glycoprotein Gn.</title>
        <authorList>
            <person name="Wang H."/>
            <person name="Alminaite A."/>
            <person name="Vaheri A."/>
            <person name="Plyusnin A."/>
        </authorList>
    </citation>
    <scope>INTERACTION WITH THE NUCLEOPROTEIN (GLYCOPROTEIN N)</scope>
    <scope>DOMAIN (GLYCOPROTEIN N)</scope>
    <source>
        <strain>Moravia</strain>
    </source>
</reference>
<reference key="4">
    <citation type="journal article" date="2011" name="Virology">
        <title>The cytoplasmic tail of hantavirus Gn glycoprotein interacts with RNA.</title>
        <authorList>
            <person name="Strandin T."/>
            <person name="Hepojoki J."/>
            <person name="Wang H."/>
            <person name="Vaheri A."/>
            <person name="Lankinen H."/>
        </authorList>
    </citation>
    <scope>FUNCTION (GLYCOPROTEIN N)</scope>
    <scope>DOMAIN (GLYCOPROTEIN N)</scope>
</reference>
<reference key="5">
    <citation type="journal article" date="2011" name="J. Virol.">
        <title>The C-terminal 42 residues of the Tula virus Gn protein regulate interferon induction.</title>
        <authorList>
            <person name="Matthys V."/>
            <person name="Gorbunova E.E."/>
            <person name="Gavrilovskaya I.N."/>
            <person name="Pepini T."/>
            <person name="Mackow E.R."/>
        </authorList>
    </citation>
    <scope>FUNCTION (GLYCOPROTEIN N)</scope>
    <scope>DOMAIN (GLYCOPROTEIN N)</scope>
</reference>
<reference key="6">
    <citation type="journal article" date="2014" name="J. Virol.">
        <title>Hantavirus GnT elements mediate TRAF3 binding and inhibit RIG-I/TBK1-directed beta interferon transcription by blocking IRF3 phosphorylation.</title>
        <authorList>
            <person name="Matthys V.S."/>
            <person name="Cimica V."/>
            <person name="Dalrymple N.A."/>
            <person name="Glennon N.B."/>
            <person name="Bianco C."/>
            <person name="Mackow E.R."/>
        </authorList>
    </citation>
    <scope>FUNCTION (GLYCOPROTEIN N)</scope>
</reference>
<reference key="7">
    <citation type="journal article" date="2014" name="Viruses">
        <title>Hantavirus Gn and Gc envelope glycoproteins: key structural units for virus cell entry and virus assembly.</title>
        <authorList>
            <person name="Cifuentes-Munoz N."/>
            <person name="Salazar-Quiroz N."/>
            <person name="Tischler N.D."/>
        </authorList>
    </citation>
    <scope>REVIEW</scope>
</reference>
<reference key="8">
    <citation type="journal article" date="2010" name="J. Virol.">
        <title>Electron cryotomography of Tula hantavirus suggests a unique assembly paradigm for enveloped viruses.</title>
        <authorList>
            <person name="Huiskonen J.T."/>
            <person name="Hepojoki J."/>
            <person name="Laurinmaeki P."/>
            <person name="Vaheri A."/>
            <person name="Lankinen H."/>
            <person name="Butcher S.J."/>
            <person name="Gruenewald K."/>
        </authorList>
    </citation>
    <scope>STRUCTURE BY ELECTRON MICROSCOPY (36 ANGSTROMS)</scope>
    <scope>SUBUNIT (GLYCOPROTEIN N)</scope>
    <scope>SUBUNIT (GLYCOPROTEIN C)</scope>
    <scope>SUBCELLULAR LOCATION (GLYCOPROTEIN N)</scope>
    <scope>SUBCELLULAR LOCATION (GLYCOPROTEIN C)</scope>
</reference>
<comment type="function">
    <molecule>Glycoprotein N</molecule>
    <text evidence="1 7 10 11 12 13">Forms homotetramers with glycoprotein C at the surface of the virion (By similarity). Attaches the virion to host cell receptors including integrin alpha5/ITGB1 (Probable). This attachment induces virion internalization predominantly through clathrin-dependent endocytosis (By similarity). Mediates the assembly and budding of infectious virus particles through its interaction with the nucleocapsid protein and the viral genome (PubMed:21807393). May dysregulate normal immune and endothelial cell responses through an ITAM motif. Translocates to mitochondria, binds to host TUFM and recruits MAP1LC3B (By similarity). These interactions induce mitochondrial autophagy and therefore destruction of host MAVS leading to inhibition of type I interferon (IFN) responses (By similarity). Concomitant breakdown of glycoprotein N is apparently prevented by the nucleoprotein that may inhibit Gn-stimulated autophagosome-lysosome fusion (By similarity). Interacts with the viral genomic RNA (PubMed:21807393). Inhibits the host RIG-I/TBK1 pathway by disrupting the formation of TBK1-TRAF3 complexes and downstream signaling responses required for IFN-beta transcription (PubMed:16973572, PubMed:21367904, PubMed:24390324).</text>
</comment>
<comment type="function">
    <molecule>Glycoprotein C</molecule>
    <text evidence="1">Forms homotetramers with glycoprotein N at the surface of the virion. Attaches the virion to host cell receptors including integrin ITGAV/ITGB3. This attachment induces virion internalization predominantly through clathrin-dependent endocytosis. Class II fusion protein that promotes fusion of viral membrane with host endosomal membrane after endocytosis of the virion.</text>
</comment>
<comment type="subunit">
    <molecule>Glycoprotein N</molecule>
    <text evidence="1 8 9">Homodimer (By similarity). Homotetramer; forms heterotetrameric Gn-Gc spikes in the pre-fusion conformation (PubMed:20219926). Interacts (via C-terminus) with the nucleoprotein (PubMed:20566401). Interacts with host TUFM; this interaction contributes to the virus-induced degradation of mitochondria by autophagy, which leads to degradation of host MAVS and inhibition of type I interferon (IFN) responses (By similarity). Interacts with host MAP1LC3B; this interaction contributes to the virus-induced degradation of mitochondria by autophagy, which leads to degradation of host MAVS and inhibition of type I interferon (IFN) responses (By similarity).</text>
</comment>
<comment type="subunit">
    <molecule>Glycoprotein C</molecule>
    <text evidence="1 2 8">Homodimer (By similarity). Homotetramer; forms heterotetrameric Gn-Gc spikes in the pre-fusion conformation (PubMed:20219926). Homotrimer; forms homotrimer in the post-fusion conformation at acidic pH (By similarity). Interacts (via C-terminus) with the nucleoprotein (By similarity).</text>
</comment>
<comment type="subcellular location">
    <molecule>Glycoprotein N</molecule>
    <subcellularLocation>
        <location evidence="8">Virion membrane</location>
        <topology evidence="13">Multi-pass membrane protein</topology>
    </subcellularLocation>
    <subcellularLocation>
        <location evidence="1">Host cell surface</location>
    </subcellularLocation>
    <subcellularLocation>
        <location evidence="1">Host Golgi apparatus membrane</location>
        <topology evidence="1">Multi-pass membrane protein</topology>
    </subcellularLocation>
    <subcellularLocation>
        <location evidence="1">Host endoplasmic reticulum membrane</location>
        <topology evidence="1">Multi-pass membrane protein</topology>
    </subcellularLocation>
    <subcellularLocation>
        <location evidence="1">Host mitochondrion</location>
    </subcellularLocation>
    <text evidence="2">Interaction between glycoprotein N and glycoprotein C is essential for proper targeting of glycoprotein N to the host Golgi complex, where virion budding occurs.</text>
</comment>
<comment type="subcellular location">
    <molecule>Glycoprotein C</molecule>
    <subcellularLocation>
        <location evidence="8">Virion membrane</location>
        <topology evidence="13">Single-pass type I membrane protein</topology>
    </subcellularLocation>
    <subcellularLocation>
        <location evidence="1">Host cell surface</location>
    </subcellularLocation>
    <subcellularLocation>
        <location evidence="1">Host Golgi apparatus membrane</location>
        <topology evidence="1">Single-pass type I membrane protein</topology>
    </subcellularLocation>
    <subcellularLocation>
        <location evidence="1">Host endoplasmic reticulum membrane</location>
        <topology evidence="1">Single-pass type I membrane protein</topology>
    </subcellularLocation>
    <text evidence="1 13">Budding probably takes place at the host Golgi (Probable). Glycoprotein C cytoplasmic tail is important for efficient Golgi localization (By similarity).</text>
</comment>
<comment type="domain">
    <molecule>Glycoprotein N</molecule>
    <text evidence="1 4 7 9 10 11">The YxxL motif at the C-terminus is indispensable for the interaction with MAP1LC3B and for the Gn-mediated induction of mitochondrial autophagy (By similarity). The cytoplasmic tail is involved in the inhibition of the host innate immune response (PubMed:16973572, PubMed:21367904). The C-terminus of the cytoplasmic tail is involved in binding to the viral genome and the nucleoprotein (PubMed:20566401, PubMed:21807393). Contains 2 contiguous zinc-fingers (By similarity).</text>
</comment>
<comment type="domain">
    <molecule>Glycoprotein C</molecule>
    <text evidence="2">The C-terminus is necessary for proper localization in the Golgi (By similarity). The cytoplasmic tail is involved in binding to the nucleocapsid (By similarity).</text>
</comment>
<comment type="PTM">
    <molecule>Envelopment polyprotein</molecule>
    <text evidence="1">Envelope polyprotein precursor is quickly cleaved in vivo just after synthesis, presumably by host signal peptidase.</text>
</comment>
<comment type="miscellaneous">
    <text evidence="10">TULV has the ability to regulate IFN induction although it is not pathogenic.</text>
</comment>
<comment type="similarity">
    <text evidence="13">Belongs to the hantavirus envelope glycoprotein family.</text>
</comment>
<organismHost>
    <name type="scientific">Homo sapiens</name>
    <name type="common">Human</name>
    <dbReference type="NCBI Taxonomy" id="9606"/>
</organismHost>
<organismHost>
    <name type="scientific">Microtus arvalis</name>
    <name type="common">Common vole</name>
    <name type="synonym">Field vole</name>
    <dbReference type="NCBI Taxonomy" id="47230"/>
</organismHost>
<organismHost>
    <name type="scientific">Microtus obscurus</name>
    <name type="common">Altai voie</name>
    <dbReference type="NCBI Taxonomy" id="523745"/>
</organismHost>
<accession>P0DTJ1</accession>